<proteinExistence type="inferred from homology"/>
<sequence length="124" mass="13737">MATVNQLVRKPRARKVAKSNVPALEACPQKRGVCTRVYTTTPKKPNSALRKVCRVRLTNGFEVTSYIGGEGHNLQEHSVILIRGGRVKDLPGVRYHTVRGALDCSGVKDRKQARSKYGVKRPKA</sequence>
<protein>
    <recommendedName>
        <fullName evidence="2">Small ribosomal subunit protein uS12</fullName>
    </recommendedName>
    <alternativeName>
        <fullName evidence="3">30S ribosomal protein S12</fullName>
    </alternativeName>
</protein>
<dbReference type="EMBL" id="AM933173">
    <property type="protein sequence ID" value="CAR39761.1"/>
    <property type="molecule type" value="Genomic_DNA"/>
</dbReference>
<dbReference type="RefSeq" id="WP_000246815.1">
    <property type="nucleotide sequence ID" value="NC_011274.1"/>
</dbReference>
<dbReference type="SMR" id="B5RH07"/>
<dbReference type="GeneID" id="98390450"/>
<dbReference type="KEGG" id="seg:SG3991"/>
<dbReference type="HOGENOM" id="CLU_104295_1_2_6"/>
<dbReference type="Proteomes" id="UP000008321">
    <property type="component" value="Chromosome"/>
</dbReference>
<dbReference type="GO" id="GO:0015935">
    <property type="term" value="C:small ribosomal subunit"/>
    <property type="evidence" value="ECO:0007669"/>
    <property type="project" value="InterPro"/>
</dbReference>
<dbReference type="GO" id="GO:0019843">
    <property type="term" value="F:rRNA binding"/>
    <property type="evidence" value="ECO:0007669"/>
    <property type="project" value="UniProtKB-UniRule"/>
</dbReference>
<dbReference type="GO" id="GO:0003735">
    <property type="term" value="F:structural constituent of ribosome"/>
    <property type="evidence" value="ECO:0007669"/>
    <property type="project" value="InterPro"/>
</dbReference>
<dbReference type="GO" id="GO:0000049">
    <property type="term" value="F:tRNA binding"/>
    <property type="evidence" value="ECO:0007669"/>
    <property type="project" value="UniProtKB-UniRule"/>
</dbReference>
<dbReference type="GO" id="GO:0006412">
    <property type="term" value="P:translation"/>
    <property type="evidence" value="ECO:0007669"/>
    <property type="project" value="UniProtKB-UniRule"/>
</dbReference>
<dbReference type="CDD" id="cd03368">
    <property type="entry name" value="Ribosomal_S12"/>
    <property type="match status" value="1"/>
</dbReference>
<dbReference type="FunFam" id="2.40.50.140:FF:000001">
    <property type="entry name" value="30S ribosomal protein S12"/>
    <property type="match status" value="1"/>
</dbReference>
<dbReference type="Gene3D" id="2.40.50.140">
    <property type="entry name" value="Nucleic acid-binding proteins"/>
    <property type="match status" value="1"/>
</dbReference>
<dbReference type="HAMAP" id="MF_00403_B">
    <property type="entry name" value="Ribosomal_uS12_B"/>
    <property type="match status" value="1"/>
</dbReference>
<dbReference type="InterPro" id="IPR012340">
    <property type="entry name" value="NA-bd_OB-fold"/>
</dbReference>
<dbReference type="InterPro" id="IPR006032">
    <property type="entry name" value="Ribosomal_uS12"/>
</dbReference>
<dbReference type="InterPro" id="IPR005679">
    <property type="entry name" value="Ribosomal_uS12_bac"/>
</dbReference>
<dbReference type="NCBIfam" id="TIGR00981">
    <property type="entry name" value="rpsL_bact"/>
    <property type="match status" value="1"/>
</dbReference>
<dbReference type="PANTHER" id="PTHR11652">
    <property type="entry name" value="30S RIBOSOMAL PROTEIN S12 FAMILY MEMBER"/>
    <property type="match status" value="1"/>
</dbReference>
<dbReference type="Pfam" id="PF00164">
    <property type="entry name" value="Ribosom_S12_S23"/>
    <property type="match status" value="1"/>
</dbReference>
<dbReference type="PIRSF" id="PIRSF002133">
    <property type="entry name" value="Ribosomal_S12/S23"/>
    <property type="match status" value="1"/>
</dbReference>
<dbReference type="PRINTS" id="PR01034">
    <property type="entry name" value="RIBOSOMALS12"/>
</dbReference>
<dbReference type="SUPFAM" id="SSF50249">
    <property type="entry name" value="Nucleic acid-binding proteins"/>
    <property type="match status" value="1"/>
</dbReference>
<dbReference type="PROSITE" id="PS00055">
    <property type="entry name" value="RIBOSOMAL_S12"/>
    <property type="match status" value="1"/>
</dbReference>
<accession>B5RH07</accession>
<comment type="function">
    <text evidence="2">With S4 and S5 plays an important role in translational accuracy.</text>
</comment>
<comment type="function">
    <text evidence="2">Interacts with and stabilizes bases of the 16S rRNA that are involved in tRNA selection in the A site and with the mRNA backbone. Located at the interface of the 30S and 50S subunits, it traverses the body of the 30S subunit contacting proteins on the other side and probably holding the rRNA structure together. The combined cluster of proteins S8, S12 and S17 appears to hold together the shoulder and platform of the 30S subunit.</text>
</comment>
<comment type="subunit">
    <text evidence="2">Part of the 30S ribosomal subunit. Contacts proteins S8 and S17. May interact with IF1 in the 30S initiation complex.</text>
</comment>
<comment type="similarity">
    <text evidence="2">Belongs to the universal ribosomal protein uS12 family.</text>
</comment>
<evidence type="ECO:0000250" key="1"/>
<evidence type="ECO:0000255" key="2">
    <source>
        <dbReference type="HAMAP-Rule" id="MF_00403"/>
    </source>
</evidence>
<evidence type="ECO:0000305" key="3"/>
<keyword id="KW-0488">Methylation</keyword>
<keyword id="KW-0687">Ribonucleoprotein</keyword>
<keyword id="KW-0689">Ribosomal protein</keyword>
<keyword id="KW-0694">RNA-binding</keyword>
<keyword id="KW-0699">rRNA-binding</keyword>
<keyword id="KW-0820">tRNA-binding</keyword>
<name>RS12_SALG2</name>
<reference key="1">
    <citation type="journal article" date="2008" name="Genome Res.">
        <title>Comparative genome analysis of Salmonella enteritidis PT4 and Salmonella gallinarum 287/91 provides insights into evolutionary and host adaptation pathways.</title>
        <authorList>
            <person name="Thomson N.R."/>
            <person name="Clayton D.J."/>
            <person name="Windhorst D."/>
            <person name="Vernikos G."/>
            <person name="Davidson S."/>
            <person name="Churcher C."/>
            <person name="Quail M.A."/>
            <person name="Stevens M."/>
            <person name="Jones M.A."/>
            <person name="Watson M."/>
            <person name="Barron A."/>
            <person name="Layton A."/>
            <person name="Pickard D."/>
            <person name="Kingsley R.A."/>
            <person name="Bignell A."/>
            <person name="Clark L."/>
            <person name="Harris B."/>
            <person name="Ormond D."/>
            <person name="Abdellah Z."/>
            <person name="Brooks K."/>
            <person name="Cherevach I."/>
            <person name="Chillingworth T."/>
            <person name="Woodward J."/>
            <person name="Norberczak H."/>
            <person name="Lord A."/>
            <person name="Arrowsmith C."/>
            <person name="Jagels K."/>
            <person name="Moule S."/>
            <person name="Mungall K."/>
            <person name="Saunders M."/>
            <person name="Whitehead S."/>
            <person name="Chabalgoity J.A."/>
            <person name="Maskell D."/>
            <person name="Humphreys T."/>
            <person name="Roberts M."/>
            <person name="Barrow P.A."/>
            <person name="Dougan G."/>
            <person name="Parkhill J."/>
        </authorList>
    </citation>
    <scope>NUCLEOTIDE SEQUENCE [LARGE SCALE GENOMIC DNA]</scope>
    <source>
        <strain>287/91 / NCTC 13346</strain>
    </source>
</reference>
<gene>
    <name evidence="2" type="primary">rpsL</name>
    <name type="ordered locus">SG3991</name>
</gene>
<feature type="chain" id="PRO_1000123512" description="Small ribosomal subunit protein uS12">
    <location>
        <begin position="1"/>
        <end position="124"/>
    </location>
</feature>
<feature type="modified residue" description="3-methylthioaspartic acid" evidence="1">
    <location>
        <position position="89"/>
    </location>
</feature>
<organism>
    <name type="scientific">Salmonella gallinarum (strain 287/91 / NCTC 13346)</name>
    <dbReference type="NCBI Taxonomy" id="550538"/>
    <lineage>
        <taxon>Bacteria</taxon>
        <taxon>Pseudomonadati</taxon>
        <taxon>Pseudomonadota</taxon>
        <taxon>Gammaproteobacteria</taxon>
        <taxon>Enterobacterales</taxon>
        <taxon>Enterobacteriaceae</taxon>
        <taxon>Salmonella</taxon>
    </lineage>
</organism>